<keyword id="KW-0007">Acetylation</keyword>
<keyword id="KW-0012">Acyltransferase</keyword>
<keyword id="KW-0963">Cytoplasm</keyword>
<keyword id="KW-0206">Cytoskeleton</keyword>
<keyword id="KW-0493">Microtubule</keyword>
<keyword id="KW-1185">Reference proteome</keyword>
<keyword id="KW-0808">Transferase</keyword>
<reference key="1">
    <citation type="journal article" date="2005" name="Science">
        <title>The transcriptional landscape of the mammalian genome.</title>
        <authorList>
            <person name="Carninci P."/>
            <person name="Kasukawa T."/>
            <person name="Katayama S."/>
            <person name="Gough J."/>
            <person name="Frith M.C."/>
            <person name="Maeda N."/>
            <person name="Oyama R."/>
            <person name="Ravasi T."/>
            <person name="Lenhard B."/>
            <person name="Wells C."/>
            <person name="Kodzius R."/>
            <person name="Shimokawa K."/>
            <person name="Bajic V.B."/>
            <person name="Brenner S.E."/>
            <person name="Batalov S."/>
            <person name="Forrest A.R."/>
            <person name="Zavolan M."/>
            <person name="Davis M.J."/>
            <person name="Wilming L.G."/>
            <person name="Aidinis V."/>
            <person name="Allen J.E."/>
            <person name="Ambesi-Impiombato A."/>
            <person name="Apweiler R."/>
            <person name="Aturaliya R.N."/>
            <person name="Bailey T.L."/>
            <person name="Bansal M."/>
            <person name="Baxter L."/>
            <person name="Beisel K.W."/>
            <person name="Bersano T."/>
            <person name="Bono H."/>
            <person name="Chalk A.M."/>
            <person name="Chiu K.P."/>
            <person name="Choudhary V."/>
            <person name="Christoffels A."/>
            <person name="Clutterbuck D.R."/>
            <person name="Crowe M.L."/>
            <person name="Dalla E."/>
            <person name="Dalrymple B.P."/>
            <person name="de Bono B."/>
            <person name="Della Gatta G."/>
            <person name="di Bernardo D."/>
            <person name="Down T."/>
            <person name="Engstrom P."/>
            <person name="Fagiolini M."/>
            <person name="Faulkner G."/>
            <person name="Fletcher C.F."/>
            <person name="Fukushima T."/>
            <person name="Furuno M."/>
            <person name="Futaki S."/>
            <person name="Gariboldi M."/>
            <person name="Georgii-Hemming P."/>
            <person name="Gingeras T.R."/>
            <person name="Gojobori T."/>
            <person name="Green R.E."/>
            <person name="Gustincich S."/>
            <person name="Harbers M."/>
            <person name="Hayashi Y."/>
            <person name="Hensch T.K."/>
            <person name="Hirokawa N."/>
            <person name="Hill D."/>
            <person name="Huminiecki L."/>
            <person name="Iacono M."/>
            <person name="Ikeo K."/>
            <person name="Iwama A."/>
            <person name="Ishikawa T."/>
            <person name="Jakt M."/>
            <person name="Kanapin A."/>
            <person name="Katoh M."/>
            <person name="Kawasawa Y."/>
            <person name="Kelso J."/>
            <person name="Kitamura H."/>
            <person name="Kitano H."/>
            <person name="Kollias G."/>
            <person name="Krishnan S.P."/>
            <person name="Kruger A."/>
            <person name="Kummerfeld S.K."/>
            <person name="Kurochkin I.V."/>
            <person name="Lareau L.F."/>
            <person name="Lazarevic D."/>
            <person name="Lipovich L."/>
            <person name="Liu J."/>
            <person name="Liuni S."/>
            <person name="McWilliam S."/>
            <person name="Madan Babu M."/>
            <person name="Madera M."/>
            <person name="Marchionni L."/>
            <person name="Matsuda H."/>
            <person name="Matsuzawa S."/>
            <person name="Miki H."/>
            <person name="Mignone F."/>
            <person name="Miyake S."/>
            <person name="Morris K."/>
            <person name="Mottagui-Tabar S."/>
            <person name="Mulder N."/>
            <person name="Nakano N."/>
            <person name="Nakauchi H."/>
            <person name="Ng P."/>
            <person name="Nilsson R."/>
            <person name="Nishiguchi S."/>
            <person name="Nishikawa S."/>
            <person name="Nori F."/>
            <person name="Ohara O."/>
            <person name="Okazaki Y."/>
            <person name="Orlando V."/>
            <person name="Pang K.C."/>
            <person name="Pavan W.J."/>
            <person name="Pavesi G."/>
            <person name="Pesole G."/>
            <person name="Petrovsky N."/>
            <person name="Piazza S."/>
            <person name="Reed J."/>
            <person name="Reid J.F."/>
            <person name="Ring B.Z."/>
            <person name="Ringwald M."/>
            <person name="Rost B."/>
            <person name="Ruan Y."/>
            <person name="Salzberg S.L."/>
            <person name="Sandelin A."/>
            <person name="Schneider C."/>
            <person name="Schoenbach C."/>
            <person name="Sekiguchi K."/>
            <person name="Semple C.A."/>
            <person name="Seno S."/>
            <person name="Sessa L."/>
            <person name="Sheng Y."/>
            <person name="Shibata Y."/>
            <person name="Shimada H."/>
            <person name="Shimada K."/>
            <person name="Silva D."/>
            <person name="Sinclair B."/>
            <person name="Sperling S."/>
            <person name="Stupka E."/>
            <person name="Sugiura K."/>
            <person name="Sultana R."/>
            <person name="Takenaka Y."/>
            <person name="Taki K."/>
            <person name="Tammoja K."/>
            <person name="Tan S.L."/>
            <person name="Tang S."/>
            <person name="Taylor M.S."/>
            <person name="Tegner J."/>
            <person name="Teichmann S.A."/>
            <person name="Ueda H.R."/>
            <person name="van Nimwegen E."/>
            <person name="Verardo R."/>
            <person name="Wei C.L."/>
            <person name="Yagi K."/>
            <person name="Yamanishi H."/>
            <person name="Zabarovsky E."/>
            <person name="Zhu S."/>
            <person name="Zimmer A."/>
            <person name="Hide W."/>
            <person name="Bult C."/>
            <person name="Grimmond S.M."/>
            <person name="Teasdale R.D."/>
            <person name="Liu E.T."/>
            <person name="Brusic V."/>
            <person name="Quackenbush J."/>
            <person name="Wahlestedt C."/>
            <person name="Mattick J.S."/>
            <person name="Hume D.A."/>
            <person name="Kai C."/>
            <person name="Sasaki D."/>
            <person name="Tomaru Y."/>
            <person name="Fukuda S."/>
            <person name="Kanamori-Katayama M."/>
            <person name="Suzuki M."/>
            <person name="Aoki J."/>
            <person name="Arakawa T."/>
            <person name="Iida J."/>
            <person name="Imamura K."/>
            <person name="Itoh M."/>
            <person name="Kato T."/>
            <person name="Kawaji H."/>
            <person name="Kawagashira N."/>
            <person name="Kawashima T."/>
            <person name="Kojima M."/>
            <person name="Kondo S."/>
            <person name="Konno H."/>
            <person name="Nakano K."/>
            <person name="Ninomiya N."/>
            <person name="Nishio T."/>
            <person name="Okada M."/>
            <person name="Plessy C."/>
            <person name="Shibata K."/>
            <person name="Shiraki T."/>
            <person name="Suzuki S."/>
            <person name="Tagami M."/>
            <person name="Waki K."/>
            <person name="Watahiki A."/>
            <person name="Okamura-Oho Y."/>
            <person name="Suzuki H."/>
            <person name="Kawai J."/>
            <person name="Hayashizaki Y."/>
        </authorList>
    </citation>
    <scope>NUCLEOTIDE SEQUENCE [LARGE SCALE MRNA]</scope>
    <source>
        <strain>C57BL/6J</strain>
        <tissue>Kidney</tissue>
    </source>
</reference>
<reference key="2">
    <citation type="journal article" date="2004" name="Genome Res.">
        <title>The status, quality, and expansion of the NIH full-length cDNA project: the Mammalian Gene Collection (MGC).</title>
        <authorList>
            <consortium name="The MGC Project Team"/>
        </authorList>
    </citation>
    <scope>NUCLEOTIDE SEQUENCE [LARGE SCALE MRNA]</scope>
    <source>
        <strain>FVB/N</strain>
        <tissue>Kidney</tissue>
    </source>
</reference>
<reference key="3">
    <citation type="journal article" date="2010" name="Cell">
        <title>A tissue-specific atlas of mouse protein phosphorylation and expression.</title>
        <authorList>
            <person name="Huttlin E.L."/>
            <person name="Jedrychowski M.P."/>
            <person name="Elias J.E."/>
            <person name="Goswami T."/>
            <person name="Rad R."/>
            <person name="Beausoleil S.A."/>
            <person name="Villen J."/>
            <person name="Haas W."/>
            <person name="Sowa M.E."/>
            <person name="Gygi S.P."/>
        </authorList>
    </citation>
    <scope>IDENTIFICATION BY MASS SPECTROMETRY [LARGE SCALE ANALYSIS]</scope>
    <source>
        <tissue>Kidney</tissue>
        <tissue>Liver</tissue>
    </source>
</reference>
<reference key="4">
    <citation type="journal article" date="2013" name="Mol. Cell">
        <title>SIRT5-mediated lysine desuccinylation impacts diverse metabolic pathways.</title>
        <authorList>
            <person name="Park J."/>
            <person name="Chen Y."/>
            <person name="Tishkoff D.X."/>
            <person name="Peng C."/>
            <person name="Tan M."/>
            <person name="Dai L."/>
            <person name="Xie Z."/>
            <person name="Zhang Y."/>
            <person name="Zwaans B.M."/>
            <person name="Skinner M.E."/>
            <person name="Lombard D.B."/>
            <person name="Zhao Y."/>
        </authorList>
    </citation>
    <scope>SUCCINYLATION [LARGE SCALE ANALYSIS] AT LYS-124; LYS-128 AND LYS-140</scope>
    <scope>IDENTIFICATION BY MASS SPECTROMETRY [LARGE SCALE ANALYSIS]</scope>
    <source>
        <tissue>Liver</tissue>
    </source>
</reference>
<reference key="5">
    <citation type="journal article" date="2013" name="Proc. Natl. Acad. Sci. U.S.A.">
        <title>Label-free quantitative proteomics of the lysine acetylome in mitochondria identifies substrates of SIRT3 in metabolic pathways.</title>
        <authorList>
            <person name="Rardin M.J."/>
            <person name="Newman J.C."/>
            <person name="Held J.M."/>
            <person name="Cusack M.P."/>
            <person name="Sorensen D.J."/>
            <person name="Li B."/>
            <person name="Schilling B."/>
            <person name="Mooney S.D."/>
            <person name="Kahn C.R."/>
            <person name="Verdin E."/>
            <person name="Gibson B.W."/>
        </authorList>
    </citation>
    <scope>ACETYLATION [LARGE SCALE ANALYSIS] AT LYS-43; LYS-83; LYS-124; LYS-128; LYS-140 AND LYS-150</scope>
    <scope>IDENTIFICATION BY MASS SPECTROMETRY [LARGE SCALE ANALYSIS]</scope>
    <source>
        <tissue>Liver</tissue>
    </source>
</reference>
<name>KEG1_MOUSE</name>
<comment type="function">
    <text evidence="1">Acyltransferase which transfers the acyl group to the N-terminus of glycine. Can conjugate a multitude of substrates to form a variety of N-acylglycines (By similarity).</text>
</comment>
<comment type="catalytic activity">
    <reaction>
        <text>an acyl-CoA + glycine = an N-acylglycine + CoA + H(+)</text>
        <dbReference type="Rhea" id="RHEA:19869"/>
        <dbReference type="ChEBI" id="CHEBI:15378"/>
        <dbReference type="ChEBI" id="CHEBI:57287"/>
        <dbReference type="ChEBI" id="CHEBI:57305"/>
        <dbReference type="ChEBI" id="CHEBI:57670"/>
        <dbReference type="ChEBI" id="CHEBI:58342"/>
        <dbReference type="EC" id="2.3.1.13"/>
    </reaction>
</comment>
<comment type="subunit">
    <text evidence="1">Binds to microtubules.</text>
</comment>
<comment type="subcellular location">
    <subcellularLocation>
        <location evidence="1">Cytoplasm</location>
        <location evidence="1">Cytoskeleton</location>
        <location evidence="1">Microtubule organizing center</location>
        <location evidence="1">Centrosome</location>
    </subcellularLocation>
    <text evidence="1">Also localizes in regions surrounding the centrosome. The centrosomal localization is dependent on microtubules (By similarity).</text>
</comment>
<comment type="similarity">
    <text evidence="3">Belongs to the glycine N-acyltransferase family.</text>
</comment>
<gene>
    <name type="primary">Keg1</name>
</gene>
<dbReference type="EC" id="2.3.1.13"/>
<dbReference type="EMBL" id="AK002360">
    <property type="protein sequence ID" value="BAB22039.1"/>
    <property type="molecule type" value="mRNA"/>
</dbReference>
<dbReference type="EMBL" id="AK165515">
    <property type="protein sequence ID" value="BAE38231.1"/>
    <property type="molecule type" value="mRNA"/>
</dbReference>
<dbReference type="EMBL" id="BC010803">
    <property type="protein sequence ID" value="AAH10803.1"/>
    <property type="molecule type" value="mRNA"/>
</dbReference>
<dbReference type="CCDS" id="CCDS29636.1"/>
<dbReference type="RefSeq" id="NP_083826.1">
    <property type="nucleotide sequence ID" value="NM_029550.4"/>
</dbReference>
<dbReference type="SMR" id="Q9DCY0"/>
<dbReference type="FunCoup" id="Q9DCY0">
    <property type="interactions" value="15"/>
</dbReference>
<dbReference type="STRING" id="10090.ENSMUSP00000025598"/>
<dbReference type="GlyGen" id="Q9DCY0">
    <property type="glycosylation" value="1 site, 1 O-linked glycan (1 site)"/>
</dbReference>
<dbReference type="iPTMnet" id="Q9DCY0"/>
<dbReference type="PhosphoSitePlus" id="Q9DCY0"/>
<dbReference type="SwissPalm" id="Q9DCY0"/>
<dbReference type="jPOST" id="Q9DCY0"/>
<dbReference type="PaxDb" id="10090-ENSMUSP00000025598"/>
<dbReference type="PeptideAtlas" id="Q9DCY0"/>
<dbReference type="ProteomicsDB" id="264741"/>
<dbReference type="DNASU" id="64697"/>
<dbReference type="Ensembl" id="ENSMUST00000025598.10">
    <property type="protein sequence ID" value="ENSMUSP00000025598.4"/>
    <property type="gene ID" value="ENSMUSG00000024694.10"/>
</dbReference>
<dbReference type="GeneID" id="64697"/>
<dbReference type="KEGG" id="mmu:64697"/>
<dbReference type="UCSC" id="uc008gul.2">
    <property type="organism name" value="mouse"/>
</dbReference>
<dbReference type="AGR" id="MGI:1928492"/>
<dbReference type="CTD" id="64697"/>
<dbReference type="MGI" id="MGI:1928492">
    <property type="gene designation" value="Keg1"/>
</dbReference>
<dbReference type="VEuPathDB" id="HostDB:ENSMUSG00000024694"/>
<dbReference type="eggNOG" id="ENOG502SDQB">
    <property type="taxonomic scope" value="Eukaryota"/>
</dbReference>
<dbReference type="GeneTree" id="ENSGT00950000183133"/>
<dbReference type="InParanoid" id="Q9DCY0"/>
<dbReference type="OMA" id="HTQCFLY"/>
<dbReference type="OrthoDB" id="61870at2759"/>
<dbReference type="PhylomeDB" id="Q9DCY0"/>
<dbReference type="TreeFam" id="TF353258"/>
<dbReference type="BioGRID-ORCS" id="64697">
    <property type="hits" value="1 hit in 76 CRISPR screens"/>
</dbReference>
<dbReference type="ChiTaRS" id="Keg1">
    <property type="organism name" value="mouse"/>
</dbReference>
<dbReference type="PRO" id="PR:Q9DCY0"/>
<dbReference type="Proteomes" id="UP000000589">
    <property type="component" value="Chromosome 19"/>
</dbReference>
<dbReference type="RNAct" id="Q9DCY0">
    <property type="molecule type" value="protein"/>
</dbReference>
<dbReference type="Bgee" id="ENSMUSG00000024694">
    <property type="expression patterns" value="Expressed in right kidney and 53 other cell types or tissues"/>
</dbReference>
<dbReference type="ExpressionAtlas" id="Q9DCY0">
    <property type="expression patterns" value="baseline and differential"/>
</dbReference>
<dbReference type="GO" id="GO:0005813">
    <property type="term" value="C:centrosome"/>
    <property type="evidence" value="ECO:0007669"/>
    <property type="project" value="UniProtKB-SubCell"/>
</dbReference>
<dbReference type="GO" id="GO:0005874">
    <property type="term" value="C:microtubule"/>
    <property type="evidence" value="ECO:0007669"/>
    <property type="project" value="UniProtKB-KW"/>
</dbReference>
<dbReference type="GO" id="GO:0005739">
    <property type="term" value="C:mitochondrion"/>
    <property type="evidence" value="ECO:0000314"/>
    <property type="project" value="UniProtKB"/>
</dbReference>
<dbReference type="GO" id="GO:0047961">
    <property type="term" value="F:glycine N-acyltransferase activity"/>
    <property type="evidence" value="ECO:0007669"/>
    <property type="project" value="UniProtKB-EC"/>
</dbReference>
<dbReference type="FunFam" id="3.40.630.30:FF:000075">
    <property type="entry name" value="Glycine N-acyltransferase"/>
    <property type="match status" value="1"/>
</dbReference>
<dbReference type="Gene3D" id="3.40.630.30">
    <property type="match status" value="1"/>
</dbReference>
<dbReference type="InterPro" id="IPR016181">
    <property type="entry name" value="Acyl_CoA_acyltransferase"/>
</dbReference>
<dbReference type="InterPro" id="IPR010313">
    <property type="entry name" value="Glycine_N-acyltransferase"/>
</dbReference>
<dbReference type="InterPro" id="IPR013652">
    <property type="entry name" value="Glycine_N-acyltransferase_C"/>
</dbReference>
<dbReference type="InterPro" id="IPR015938">
    <property type="entry name" value="Glycine_N-acyltransferase_N"/>
</dbReference>
<dbReference type="PANTHER" id="PTHR15298:SF13">
    <property type="entry name" value="GLYCINE N-ACYLTRANSFERASE-LIKE PROTEIN KEG1"/>
    <property type="match status" value="1"/>
</dbReference>
<dbReference type="PANTHER" id="PTHR15298">
    <property type="entry name" value="L-COA N-ACYLTRANSFERASE-RELATED"/>
    <property type="match status" value="1"/>
</dbReference>
<dbReference type="Pfam" id="PF08444">
    <property type="entry name" value="Gly_acyl_tr_C"/>
    <property type="match status" value="1"/>
</dbReference>
<dbReference type="Pfam" id="PF06021">
    <property type="entry name" value="Gly_acyl_tr_N"/>
    <property type="match status" value="1"/>
</dbReference>
<dbReference type="SUPFAM" id="SSF55729">
    <property type="entry name" value="Acyl-CoA N-acyltransferases (Nat)"/>
    <property type="match status" value="1"/>
</dbReference>
<feature type="chain" id="PRO_0000281876" description="Glycine N-acyltransferase-like protein Keg1">
    <location>
        <begin position="1"/>
        <end position="295"/>
    </location>
</feature>
<feature type="modified residue" description="N6-acetyllysine; alternate" evidence="2">
    <location>
        <position position="41"/>
    </location>
</feature>
<feature type="modified residue" description="N6-succinyllysine; alternate" evidence="2">
    <location>
        <position position="41"/>
    </location>
</feature>
<feature type="modified residue" description="N6-acetyllysine" evidence="4">
    <location>
        <position position="43"/>
    </location>
</feature>
<feature type="modified residue" description="N6-acetyllysine; alternate" evidence="2">
    <location>
        <position position="48"/>
    </location>
</feature>
<feature type="modified residue" description="N6-succinyllysine; alternate" evidence="2">
    <location>
        <position position="48"/>
    </location>
</feature>
<feature type="modified residue" description="N6-acetyllysine" evidence="2">
    <location>
        <position position="80"/>
    </location>
</feature>
<feature type="modified residue" description="N6-acetyllysine" evidence="4">
    <location>
        <position position="83"/>
    </location>
</feature>
<feature type="modified residue" description="N6-acetyllysine; alternate" evidence="4">
    <location>
        <position position="124"/>
    </location>
</feature>
<feature type="modified residue" description="N6-succinyllysine; alternate" evidence="5">
    <location>
        <position position="124"/>
    </location>
</feature>
<feature type="modified residue" description="N6-acetyllysine; alternate" evidence="4">
    <location>
        <position position="128"/>
    </location>
</feature>
<feature type="modified residue" description="N6-succinyllysine; alternate" evidence="5">
    <location>
        <position position="128"/>
    </location>
</feature>
<feature type="modified residue" description="N6-acetyllysine; alternate" evidence="4">
    <location>
        <position position="140"/>
    </location>
</feature>
<feature type="modified residue" description="N6-succinyllysine; alternate" evidence="5">
    <location>
        <position position="140"/>
    </location>
</feature>
<feature type="modified residue" description="N6-acetyllysine" evidence="4">
    <location>
        <position position="150"/>
    </location>
</feature>
<feature type="modified residue" description="N6-acetyllysine; alternate" evidence="2">
    <location>
        <position position="255"/>
    </location>
</feature>
<feature type="modified residue" description="N6-succinyllysine; alternate" evidence="2">
    <location>
        <position position="255"/>
    </location>
</feature>
<sequence length="295" mass="33723">MFCLQSSQALQVLENSLRKHLPESLKVYGTVFHINQGNPFKLKTLVDKWPDFNTVVIRPQEEDMTDDLDHYNNTYLVYSKDPKHCQEFLGSSEVINWKQHLQIQSSQSDLGKVIESLGATNLGKVKHKQCFLYMVCQTAKKLAPSLMDAKNLVVSRNKLTPLDQQLFKFASLDVTHAALVNSLWHFGGNEKSQKFIERCIFTFPSFCIMGPEGTPVSWTLMDHTGELRMGGTLPKYRRQSLIYHVASQQIQTLEKLGFPMYAHVDKANFTVQRMVGLLGQILLPCTWNQWNCVPL</sequence>
<protein>
    <recommendedName>
        <fullName>Glycine N-acyltransferase-like protein Keg1</fullName>
        <ecNumber>2.3.1.13</ecNumber>
    </recommendedName>
    <alternativeName>
        <fullName>Acyl-CoA:glycine N-acyltransferase protein Keg1</fullName>
    </alternativeName>
    <alternativeName>
        <fullName>Kidney-expressed gene 1 protein</fullName>
    </alternativeName>
</protein>
<accession>Q9DCY0</accession>
<proteinExistence type="evidence at protein level"/>
<evidence type="ECO:0000250" key="1"/>
<evidence type="ECO:0000250" key="2">
    <source>
        <dbReference type="UniProtKB" id="Q5FW57"/>
    </source>
</evidence>
<evidence type="ECO:0000305" key="3"/>
<evidence type="ECO:0007744" key="4">
    <source>
    </source>
</evidence>
<evidence type="ECO:0007744" key="5">
    <source>
    </source>
</evidence>
<organism>
    <name type="scientific">Mus musculus</name>
    <name type="common">Mouse</name>
    <dbReference type="NCBI Taxonomy" id="10090"/>
    <lineage>
        <taxon>Eukaryota</taxon>
        <taxon>Metazoa</taxon>
        <taxon>Chordata</taxon>
        <taxon>Craniata</taxon>
        <taxon>Vertebrata</taxon>
        <taxon>Euteleostomi</taxon>
        <taxon>Mammalia</taxon>
        <taxon>Eutheria</taxon>
        <taxon>Euarchontoglires</taxon>
        <taxon>Glires</taxon>
        <taxon>Rodentia</taxon>
        <taxon>Myomorpha</taxon>
        <taxon>Muroidea</taxon>
        <taxon>Muridae</taxon>
        <taxon>Murinae</taxon>
        <taxon>Mus</taxon>
        <taxon>Mus</taxon>
    </lineage>
</organism>